<keyword id="KW-0028">Amino-acid biosynthesis</keyword>
<keyword id="KW-0963">Cytoplasm</keyword>
<keyword id="KW-0220">Diaminopimelate biosynthesis</keyword>
<keyword id="KW-0457">Lysine biosynthesis</keyword>
<keyword id="KW-0520">NAD</keyword>
<keyword id="KW-0521">NADP</keyword>
<keyword id="KW-0560">Oxidoreductase</keyword>
<comment type="function">
    <text evidence="1">Catalyzes the conversion of 4-hydroxy-tetrahydrodipicolinate (HTPA) to tetrahydrodipicolinate.</text>
</comment>
<comment type="catalytic activity">
    <reaction evidence="1">
        <text>(S)-2,3,4,5-tetrahydrodipicolinate + NAD(+) + H2O = (2S,4S)-4-hydroxy-2,3,4,5-tetrahydrodipicolinate + NADH + H(+)</text>
        <dbReference type="Rhea" id="RHEA:35323"/>
        <dbReference type="ChEBI" id="CHEBI:15377"/>
        <dbReference type="ChEBI" id="CHEBI:15378"/>
        <dbReference type="ChEBI" id="CHEBI:16845"/>
        <dbReference type="ChEBI" id="CHEBI:57540"/>
        <dbReference type="ChEBI" id="CHEBI:57945"/>
        <dbReference type="ChEBI" id="CHEBI:67139"/>
        <dbReference type="EC" id="1.17.1.8"/>
    </reaction>
</comment>
<comment type="catalytic activity">
    <reaction evidence="1">
        <text>(S)-2,3,4,5-tetrahydrodipicolinate + NADP(+) + H2O = (2S,4S)-4-hydroxy-2,3,4,5-tetrahydrodipicolinate + NADPH + H(+)</text>
        <dbReference type="Rhea" id="RHEA:35331"/>
        <dbReference type="ChEBI" id="CHEBI:15377"/>
        <dbReference type="ChEBI" id="CHEBI:15378"/>
        <dbReference type="ChEBI" id="CHEBI:16845"/>
        <dbReference type="ChEBI" id="CHEBI:57783"/>
        <dbReference type="ChEBI" id="CHEBI:58349"/>
        <dbReference type="ChEBI" id="CHEBI:67139"/>
        <dbReference type="EC" id="1.17.1.8"/>
    </reaction>
</comment>
<comment type="pathway">
    <text evidence="1">Amino-acid biosynthesis; L-lysine biosynthesis via DAP pathway; (S)-tetrahydrodipicolinate from L-aspartate: step 4/4.</text>
</comment>
<comment type="subcellular location">
    <subcellularLocation>
        <location evidence="1">Cytoplasm</location>
    </subcellularLocation>
</comment>
<comment type="similarity">
    <text evidence="1">Belongs to the DapB family.</text>
</comment>
<comment type="caution">
    <text evidence="2">Was originally thought to be a dihydrodipicolinate reductase (DHDPR), catalyzing the conversion of dihydrodipicolinate to tetrahydrodipicolinate. However, it was shown in E.coli that the substrate of the enzymatic reaction is not dihydrodipicolinate (DHDP) but in fact (2S,4S)-4-hydroxy-2,3,4,5-tetrahydrodipicolinic acid (HTPA), the product released by the DapA-catalyzed reaction.</text>
</comment>
<organism>
    <name type="scientific">Shewanella baltica (strain OS185)</name>
    <dbReference type="NCBI Taxonomy" id="402882"/>
    <lineage>
        <taxon>Bacteria</taxon>
        <taxon>Pseudomonadati</taxon>
        <taxon>Pseudomonadota</taxon>
        <taxon>Gammaproteobacteria</taxon>
        <taxon>Alteromonadales</taxon>
        <taxon>Shewanellaceae</taxon>
        <taxon>Shewanella</taxon>
    </lineage>
</organism>
<sequence length="270" mass="29265">MSGQVRVAIVGAGGRMGRTLIEAAYNHDHILLGAAIERAGSSLVGVDAGELAGVGKLKVMIMDSLDYATDDFDVLIDFTAPDASIVHLDWCVRHKKAMVIGTTGFNHAQKEQINAFAEQTPVVMAPNMSVGVNLMWKLLELAAEVMGDYTDIEIIEGHHRHKKDAPSGTALKMGEVIAKTLGRDLEKCAVYGREGITGERDRETIGFATIRAGDLVGEHTAMFADIGERLEITHKASSRMTFANGAMRAAHWLVEQKPGLYDMQQVLGLH</sequence>
<gene>
    <name evidence="1" type="primary">dapB</name>
    <name type="ordered locus">Shew185_3402</name>
</gene>
<protein>
    <recommendedName>
        <fullName evidence="1">4-hydroxy-tetrahydrodipicolinate reductase</fullName>
        <shortName evidence="1">HTPA reductase</shortName>
        <ecNumber evidence="1">1.17.1.8</ecNumber>
    </recommendedName>
</protein>
<dbReference type="EC" id="1.17.1.8" evidence="1"/>
<dbReference type="EMBL" id="CP000753">
    <property type="protein sequence ID" value="ABS09529.1"/>
    <property type="molecule type" value="Genomic_DNA"/>
</dbReference>
<dbReference type="RefSeq" id="WP_006082785.1">
    <property type="nucleotide sequence ID" value="NC_009665.1"/>
</dbReference>
<dbReference type="SMR" id="A6WRU0"/>
<dbReference type="GeneID" id="11773568"/>
<dbReference type="KEGG" id="sbm:Shew185_3402"/>
<dbReference type="HOGENOM" id="CLU_047479_2_1_6"/>
<dbReference type="UniPathway" id="UPA00034">
    <property type="reaction ID" value="UER00018"/>
</dbReference>
<dbReference type="GO" id="GO:0005829">
    <property type="term" value="C:cytosol"/>
    <property type="evidence" value="ECO:0007669"/>
    <property type="project" value="TreeGrafter"/>
</dbReference>
<dbReference type="GO" id="GO:0008839">
    <property type="term" value="F:4-hydroxy-tetrahydrodipicolinate reductase"/>
    <property type="evidence" value="ECO:0007669"/>
    <property type="project" value="UniProtKB-EC"/>
</dbReference>
<dbReference type="GO" id="GO:0051287">
    <property type="term" value="F:NAD binding"/>
    <property type="evidence" value="ECO:0007669"/>
    <property type="project" value="UniProtKB-UniRule"/>
</dbReference>
<dbReference type="GO" id="GO:0050661">
    <property type="term" value="F:NADP binding"/>
    <property type="evidence" value="ECO:0007669"/>
    <property type="project" value="UniProtKB-UniRule"/>
</dbReference>
<dbReference type="GO" id="GO:0016726">
    <property type="term" value="F:oxidoreductase activity, acting on CH or CH2 groups, NAD or NADP as acceptor"/>
    <property type="evidence" value="ECO:0007669"/>
    <property type="project" value="UniProtKB-UniRule"/>
</dbReference>
<dbReference type="GO" id="GO:0019877">
    <property type="term" value="P:diaminopimelate biosynthetic process"/>
    <property type="evidence" value="ECO:0007669"/>
    <property type="project" value="UniProtKB-UniRule"/>
</dbReference>
<dbReference type="GO" id="GO:0009089">
    <property type="term" value="P:lysine biosynthetic process via diaminopimelate"/>
    <property type="evidence" value="ECO:0007669"/>
    <property type="project" value="UniProtKB-UniRule"/>
</dbReference>
<dbReference type="CDD" id="cd02274">
    <property type="entry name" value="DHDPR_N"/>
    <property type="match status" value="1"/>
</dbReference>
<dbReference type="FunFam" id="3.30.360.10:FF:000004">
    <property type="entry name" value="4-hydroxy-tetrahydrodipicolinate reductase"/>
    <property type="match status" value="1"/>
</dbReference>
<dbReference type="FunFam" id="3.40.50.720:FF:000048">
    <property type="entry name" value="4-hydroxy-tetrahydrodipicolinate reductase"/>
    <property type="match status" value="1"/>
</dbReference>
<dbReference type="Gene3D" id="3.30.360.10">
    <property type="entry name" value="Dihydrodipicolinate Reductase, domain 2"/>
    <property type="match status" value="1"/>
</dbReference>
<dbReference type="Gene3D" id="3.40.50.720">
    <property type="entry name" value="NAD(P)-binding Rossmann-like Domain"/>
    <property type="match status" value="1"/>
</dbReference>
<dbReference type="HAMAP" id="MF_00102">
    <property type="entry name" value="DapB"/>
    <property type="match status" value="1"/>
</dbReference>
<dbReference type="InterPro" id="IPR022663">
    <property type="entry name" value="DapB_C"/>
</dbReference>
<dbReference type="InterPro" id="IPR000846">
    <property type="entry name" value="DapB_N"/>
</dbReference>
<dbReference type="InterPro" id="IPR022664">
    <property type="entry name" value="DapB_N_CS"/>
</dbReference>
<dbReference type="InterPro" id="IPR023940">
    <property type="entry name" value="DHDPR_bac"/>
</dbReference>
<dbReference type="InterPro" id="IPR036291">
    <property type="entry name" value="NAD(P)-bd_dom_sf"/>
</dbReference>
<dbReference type="NCBIfam" id="TIGR00036">
    <property type="entry name" value="dapB"/>
    <property type="match status" value="1"/>
</dbReference>
<dbReference type="PANTHER" id="PTHR20836:SF0">
    <property type="entry name" value="4-HYDROXY-TETRAHYDRODIPICOLINATE REDUCTASE 1, CHLOROPLASTIC-RELATED"/>
    <property type="match status" value="1"/>
</dbReference>
<dbReference type="PANTHER" id="PTHR20836">
    <property type="entry name" value="DIHYDRODIPICOLINATE REDUCTASE"/>
    <property type="match status" value="1"/>
</dbReference>
<dbReference type="Pfam" id="PF05173">
    <property type="entry name" value="DapB_C"/>
    <property type="match status" value="1"/>
</dbReference>
<dbReference type="Pfam" id="PF01113">
    <property type="entry name" value="DapB_N"/>
    <property type="match status" value="1"/>
</dbReference>
<dbReference type="PIRSF" id="PIRSF000161">
    <property type="entry name" value="DHPR"/>
    <property type="match status" value="1"/>
</dbReference>
<dbReference type="SUPFAM" id="SSF55347">
    <property type="entry name" value="Glyceraldehyde-3-phosphate dehydrogenase-like, C-terminal domain"/>
    <property type="match status" value="1"/>
</dbReference>
<dbReference type="SUPFAM" id="SSF51735">
    <property type="entry name" value="NAD(P)-binding Rossmann-fold domains"/>
    <property type="match status" value="1"/>
</dbReference>
<dbReference type="PROSITE" id="PS01298">
    <property type="entry name" value="DAPB"/>
    <property type="match status" value="1"/>
</dbReference>
<feature type="chain" id="PRO_1000008633" description="4-hydroxy-tetrahydrodipicolinate reductase">
    <location>
        <begin position="1"/>
        <end position="270"/>
    </location>
</feature>
<feature type="active site" description="Proton donor/acceptor" evidence="1">
    <location>
        <position position="158"/>
    </location>
</feature>
<feature type="active site" description="Proton donor" evidence="1">
    <location>
        <position position="162"/>
    </location>
</feature>
<feature type="binding site" evidence="1">
    <location>
        <begin position="11"/>
        <end position="16"/>
    </location>
    <ligand>
        <name>NAD(+)</name>
        <dbReference type="ChEBI" id="CHEBI:57540"/>
    </ligand>
</feature>
<feature type="binding site" evidence="1">
    <location>
        <position position="37"/>
    </location>
    <ligand>
        <name>NAD(+)</name>
        <dbReference type="ChEBI" id="CHEBI:57540"/>
    </ligand>
</feature>
<feature type="binding site" evidence="1">
    <location>
        <position position="38"/>
    </location>
    <ligand>
        <name>NADP(+)</name>
        <dbReference type="ChEBI" id="CHEBI:58349"/>
    </ligand>
</feature>
<feature type="binding site" evidence="1">
    <location>
        <begin position="101"/>
        <end position="103"/>
    </location>
    <ligand>
        <name>NAD(+)</name>
        <dbReference type="ChEBI" id="CHEBI:57540"/>
    </ligand>
</feature>
<feature type="binding site" evidence="1">
    <location>
        <begin position="125"/>
        <end position="128"/>
    </location>
    <ligand>
        <name>NAD(+)</name>
        <dbReference type="ChEBI" id="CHEBI:57540"/>
    </ligand>
</feature>
<feature type="binding site" evidence="1">
    <location>
        <position position="159"/>
    </location>
    <ligand>
        <name>(S)-2,3,4,5-tetrahydrodipicolinate</name>
        <dbReference type="ChEBI" id="CHEBI:16845"/>
    </ligand>
</feature>
<feature type="binding site" evidence="1">
    <location>
        <begin position="168"/>
        <end position="169"/>
    </location>
    <ligand>
        <name>(S)-2,3,4,5-tetrahydrodipicolinate</name>
        <dbReference type="ChEBI" id="CHEBI:16845"/>
    </ligand>
</feature>
<evidence type="ECO:0000255" key="1">
    <source>
        <dbReference type="HAMAP-Rule" id="MF_00102"/>
    </source>
</evidence>
<evidence type="ECO:0000305" key="2"/>
<proteinExistence type="inferred from homology"/>
<reference key="1">
    <citation type="submission" date="2007-07" db="EMBL/GenBank/DDBJ databases">
        <title>Complete sequence of chromosome of Shewanella baltica OS185.</title>
        <authorList>
            <consortium name="US DOE Joint Genome Institute"/>
            <person name="Copeland A."/>
            <person name="Lucas S."/>
            <person name="Lapidus A."/>
            <person name="Barry K."/>
            <person name="Glavina del Rio T."/>
            <person name="Dalin E."/>
            <person name="Tice H."/>
            <person name="Pitluck S."/>
            <person name="Sims D."/>
            <person name="Brettin T."/>
            <person name="Bruce D."/>
            <person name="Detter J.C."/>
            <person name="Han C."/>
            <person name="Schmutz J."/>
            <person name="Larimer F."/>
            <person name="Land M."/>
            <person name="Hauser L."/>
            <person name="Kyrpides N."/>
            <person name="Mikhailova N."/>
            <person name="Brettar I."/>
            <person name="Rodrigues J."/>
            <person name="Konstantinidis K."/>
            <person name="Tiedje J."/>
            <person name="Richardson P."/>
        </authorList>
    </citation>
    <scope>NUCLEOTIDE SEQUENCE [LARGE SCALE GENOMIC DNA]</scope>
    <source>
        <strain>OS185</strain>
    </source>
</reference>
<name>DAPB_SHEB8</name>
<accession>A6WRU0</accession>